<sequence>MDEFHRYGKEDSSWQQCFLYPLFFQEDLYAISHDHYLDGSSSSESMEHFSSNDQFSFLTVKRLIGQIRQQNHSIVLFLNCDSNPLVDRNKSSYSESVLEGLTLVLEVPFSIRSKYSVEGMNEWKSFRSIHSIFPFLEEKFPHSNYILDTRIPYSIHPEILVRTFRRWIRDAPSLHPLRSVLYKYRNSPENFKRSIIVAPRVNTRFLLFLWNHYVYECESILVPLLKQSFHPRSSSHGSFPERTHFDRKIKNIIRISRRNSLKSIWSLKDPRIHYVRYGERSIIAIKGTHLLVKKCRYHLLIFWQCYFHLWSEPYRVCSHQLSKNCSSFLGYFLRVRMKSLLVRTKMLDELFITDLITDEFYPIVPIVPIIGLLAREKFCDISGRPISKLYWTSLTDDDILDRFDRIWKNLFHYYSGSFGRDGLYRIKYILSLSCAKTLACKHKSTIRVVRKELGPELFKKSFSKEREFDFPAFSSKAAARSQRERIWHSDIPQINPLANSWQKIQDLKSENGKLNLFDQ</sequence>
<protein>
    <recommendedName>
        <fullName evidence="1">Maturase K</fullName>
    </recommendedName>
    <alternativeName>
        <fullName evidence="1">Intron maturase</fullName>
    </alternativeName>
</protein>
<gene>
    <name evidence="1" type="primary">matK</name>
</gene>
<proteinExistence type="inferred from homology"/>
<accession>Q6BDG1</accession>
<accession>Q8MEW5</accession>
<evidence type="ECO:0000255" key="1">
    <source>
        <dbReference type="HAMAP-Rule" id="MF_01390"/>
    </source>
</evidence>
<evidence type="ECO:0000305" key="2"/>
<geneLocation type="chloroplast"/>
<reference key="1">
    <citation type="submission" date="2000-08" db="EMBL/GenBank/DDBJ databases">
        <title>A re-evaluation of Phylogeny in Pinaceae inferred from two genomes.</title>
        <authorList>
            <person name="Chaw S.-M."/>
        </authorList>
    </citation>
    <scope>NUCLEOTIDE SEQUENCE [GENOMIC DNA]</scope>
</reference>
<reference key="2">
    <citation type="submission" date="2004-01" db="EMBL/GenBank/DDBJ databases">
        <title>Phylogeny and classification of Pinus.</title>
        <authorList>
            <person name="Gernandt D."/>
            <person name="Geada-Lopez G."/>
            <person name="Liston A."/>
        </authorList>
    </citation>
    <scope>NUCLEOTIDE SEQUENCE [GENOMIC DNA]</scope>
    <source>
        <tissue>Leaf</tissue>
    </source>
</reference>
<reference key="3">
    <citation type="journal article" date="2009" name="Mol. Phylogenet. Evol.">
        <title>Evolution of reduced and compact chloroplast genomes (cpDNAs) in gnetophytes: Selection toward a lower-cost strategy.</title>
        <authorList>
            <person name="Wu C.-S."/>
            <person name="Lai Y.-T."/>
            <person name="Lin C.-P."/>
            <person name="Wang Y.-N."/>
            <person name="Chaw S.-M."/>
        </authorList>
    </citation>
    <scope>NUCLEOTIDE SEQUENCE [LARGE SCALE GENOMIC DNA]</scope>
</reference>
<keyword id="KW-0150">Chloroplast</keyword>
<keyword id="KW-0507">mRNA processing</keyword>
<keyword id="KW-0934">Plastid</keyword>
<keyword id="KW-0694">RNA-binding</keyword>
<keyword id="KW-0819">tRNA processing</keyword>
<organism>
    <name type="scientific">Keteleeria davidiana</name>
    <name type="common">David's keteleeria</name>
    <name type="synonym">Pseudotsuga davidiana</name>
    <dbReference type="NCBI Taxonomy" id="3324"/>
    <lineage>
        <taxon>Eukaryota</taxon>
        <taxon>Viridiplantae</taxon>
        <taxon>Streptophyta</taxon>
        <taxon>Embryophyta</taxon>
        <taxon>Tracheophyta</taxon>
        <taxon>Spermatophyta</taxon>
        <taxon>Pinopsida</taxon>
        <taxon>Pinidae</taxon>
        <taxon>Conifers I</taxon>
        <taxon>Pinales</taxon>
        <taxon>Pinaceae</taxon>
        <taxon>Keteleeria</taxon>
    </lineage>
</organism>
<feature type="chain" id="PRO_0000143445" description="Maturase K">
    <location>
        <begin position="1"/>
        <end position="519"/>
    </location>
</feature>
<feature type="sequence conflict" description="In Ref. 2; BAD32763." evidence="2" ref="2">
    <original>FHP</original>
    <variation>SHS</variation>
    <location>
        <begin position="229"/>
        <end position="231"/>
    </location>
</feature>
<dbReference type="EMBL" id="AF295027">
    <property type="protein sequence ID" value="AAM82350.1"/>
    <property type="molecule type" value="Genomic_DNA"/>
</dbReference>
<dbReference type="EMBL" id="AB161020">
    <property type="protein sequence ID" value="BAD32763.1"/>
    <property type="molecule type" value="Genomic_DNA"/>
</dbReference>
<dbReference type="EMBL" id="AP010820">
    <property type="protein sequence ID" value="BAH11392.1"/>
    <property type="molecule type" value="Genomic_DNA"/>
</dbReference>
<dbReference type="RefSeq" id="YP_002519527.1">
    <property type="nucleotide sequence ID" value="NC_011930.1"/>
</dbReference>
<dbReference type="GeneID" id="7367961"/>
<dbReference type="GO" id="GO:0009507">
    <property type="term" value="C:chloroplast"/>
    <property type="evidence" value="ECO:0007669"/>
    <property type="project" value="UniProtKB-SubCell"/>
</dbReference>
<dbReference type="GO" id="GO:0003723">
    <property type="term" value="F:RNA binding"/>
    <property type="evidence" value="ECO:0007669"/>
    <property type="project" value="UniProtKB-KW"/>
</dbReference>
<dbReference type="GO" id="GO:0006397">
    <property type="term" value="P:mRNA processing"/>
    <property type="evidence" value="ECO:0007669"/>
    <property type="project" value="UniProtKB-KW"/>
</dbReference>
<dbReference type="GO" id="GO:0008380">
    <property type="term" value="P:RNA splicing"/>
    <property type="evidence" value="ECO:0007669"/>
    <property type="project" value="UniProtKB-UniRule"/>
</dbReference>
<dbReference type="GO" id="GO:0008033">
    <property type="term" value="P:tRNA processing"/>
    <property type="evidence" value="ECO:0007669"/>
    <property type="project" value="UniProtKB-KW"/>
</dbReference>
<dbReference type="HAMAP" id="MF_01390">
    <property type="entry name" value="MatK"/>
    <property type="match status" value="1"/>
</dbReference>
<dbReference type="InterPro" id="IPR024937">
    <property type="entry name" value="Domain_X"/>
</dbReference>
<dbReference type="InterPro" id="IPR002866">
    <property type="entry name" value="Maturase_MatK"/>
</dbReference>
<dbReference type="InterPro" id="IPR024942">
    <property type="entry name" value="Maturase_MatK_N"/>
</dbReference>
<dbReference type="PANTHER" id="PTHR34811">
    <property type="entry name" value="MATURASE K"/>
    <property type="match status" value="1"/>
</dbReference>
<dbReference type="PANTHER" id="PTHR34811:SF1">
    <property type="entry name" value="MATURASE K"/>
    <property type="match status" value="1"/>
</dbReference>
<dbReference type="Pfam" id="PF01348">
    <property type="entry name" value="Intron_maturas2"/>
    <property type="match status" value="1"/>
</dbReference>
<dbReference type="Pfam" id="PF01824">
    <property type="entry name" value="MatK_N"/>
    <property type="match status" value="1"/>
</dbReference>
<name>MATK_KETDA</name>
<comment type="function">
    <text evidence="1">Usually encoded in the trnK tRNA gene intron. Probably assists in splicing its own and other chloroplast group II introns.</text>
</comment>
<comment type="subcellular location">
    <subcellularLocation>
        <location>Plastid</location>
        <location>Chloroplast</location>
    </subcellularLocation>
</comment>
<comment type="similarity">
    <text evidence="1">Belongs to the intron maturase 2 family. MatK subfamily.</text>
</comment>